<organism>
    <name type="scientific">Drosophila melanogaster</name>
    <name type="common">Fruit fly</name>
    <dbReference type="NCBI Taxonomy" id="7227"/>
    <lineage>
        <taxon>Eukaryota</taxon>
        <taxon>Metazoa</taxon>
        <taxon>Ecdysozoa</taxon>
        <taxon>Arthropoda</taxon>
        <taxon>Hexapoda</taxon>
        <taxon>Insecta</taxon>
        <taxon>Pterygota</taxon>
        <taxon>Neoptera</taxon>
        <taxon>Endopterygota</taxon>
        <taxon>Diptera</taxon>
        <taxon>Brachycera</taxon>
        <taxon>Muscomorpha</taxon>
        <taxon>Ephydroidea</taxon>
        <taxon>Drosophilidae</taxon>
        <taxon>Drosophila</taxon>
        <taxon>Sophophora</taxon>
    </lineage>
</organism>
<name>UMPS_DROME</name>
<gene>
    <name type="primary">r-l</name>
    <name type="ORF">CG3593</name>
</gene>
<proteinExistence type="evidence at transcript level"/>
<dbReference type="EC" id="2.4.2.10"/>
<dbReference type="EC" id="4.1.1.23"/>
<dbReference type="EMBL" id="L00968">
    <property type="protein sequence ID" value="AAA29012.1"/>
    <property type="molecule type" value="Genomic_DNA"/>
</dbReference>
<dbReference type="EMBL" id="AE014297">
    <property type="protein sequence ID" value="AAF55842.1"/>
    <property type="molecule type" value="Genomic_DNA"/>
</dbReference>
<dbReference type="EMBL" id="AY058714">
    <property type="protein sequence ID" value="AAL13943.1"/>
    <property type="molecule type" value="mRNA"/>
</dbReference>
<dbReference type="EMBL" id="X54230">
    <property type="protein sequence ID" value="CAA38138.1"/>
    <property type="molecule type" value="mRNA"/>
</dbReference>
<dbReference type="PIR" id="JU0141">
    <property type="entry name" value="JU0141"/>
</dbReference>
<dbReference type="RefSeq" id="NP_524427.1">
    <property type="nucleotide sequence ID" value="NM_079703.3"/>
</dbReference>
<dbReference type="SMR" id="Q01637"/>
<dbReference type="BioGRID" id="67464">
    <property type="interactions" value="20"/>
</dbReference>
<dbReference type="FunCoup" id="Q01637">
    <property type="interactions" value="2408"/>
</dbReference>
<dbReference type="IntAct" id="Q01637">
    <property type="interactions" value="25"/>
</dbReference>
<dbReference type="STRING" id="7227.FBpp0083440"/>
<dbReference type="PaxDb" id="7227-FBpp0083440"/>
<dbReference type="DNASU" id="42493"/>
<dbReference type="EnsemblMetazoa" id="FBtr0084038">
    <property type="protein sequence ID" value="FBpp0083440"/>
    <property type="gene ID" value="FBgn0003257"/>
</dbReference>
<dbReference type="GeneID" id="42493"/>
<dbReference type="KEGG" id="dme:Dmel_CG3593"/>
<dbReference type="AGR" id="FB:FBgn0003257"/>
<dbReference type="CTD" id="42493"/>
<dbReference type="FlyBase" id="FBgn0003257">
    <property type="gene designation" value="r-l"/>
</dbReference>
<dbReference type="VEuPathDB" id="VectorBase:FBgn0003257"/>
<dbReference type="eggNOG" id="KOG1377">
    <property type="taxonomic scope" value="Eukaryota"/>
</dbReference>
<dbReference type="GeneTree" id="ENSGT00390000001856"/>
<dbReference type="HOGENOM" id="CLU_049275_1_0_1"/>
<dbReference type="InParanoid" id="Q01637"/>
<dbReference type="OMA" id="SAKHVCG"/>
<dbReference type="OrthoDB" id="10263753at2759"/>
<dbReference type="PhylomeDB" id="Q01637"/>
<dbReference type="Reactome" id="R-DME-500753">
    <property type="pathway name" value="Pyrimidine biosynthesis"/>
</dbReference>
<dbReference type="SignaLink" id="Q01637"/>
<dbReference type="UniPathway" id="UPA00070">
    <property type="reaction ID" value="UER00119"/>
</dbReference>
<dbReference type="UniPathway" id="UPA00070">
    <property type="reaction ID" value="UER00120"/>
</dbReference>
<dbReference type="BioGRID-ORCS" id="42493">
    <property type="hits" value="0 hits in 1 CRISPR screen"/>
</dbReference>
<dbReference type="GenomeRNAi" id="42493"/>
<dbReference type="PRO" id="PR:Q01637"/>
<dbReference type="Proteomes" id="UP000000803">
    <property type="component" value="Chromosome 3R"/>
</dbReference>
<dbReference type="Bgee" id="FBgn0003257">
    <property type="expression patterns" value="Expressed in adult posterior midgut class II enteroendocrine cell in adult midgut (Drosophila) and 141 other cell types or tissues"/>
</dbReference>
<dbReference type="GO" id="GO:0004588">
    <property type="term" value="F:orotate phosphoribosyltransferase activity"/>
    <property type="evidence" value="ECO:0000315"/>
    <property type="project" value="FlyBase"/>
</dbReference>
<dbReference type="GO" id="GO:0004590">
    <property type="term" value="F:orotidine-5'-phosphate decarboxylase activity"/>
    <property type="evidence" value="ECO:0000315"/>
    <property type="project" value="FlyBase"/>
</dbReference>
<dbReference type="GO" id="GO:0006207">
    <property type="term" value="P:'de novo' pyrimidine nucleobase biosynthetic process"/>
    <property type="evidence" value="ECO:0000305"/>
    <property type="project" value="FlyBase"/>
</dbReference>
<dbReference type="GO" id="GO:0044205">
    <property type="term" value="P:'de novo' UMP biosynthetic process"/>
    <property type="evidence" value="ECO:0007669"/>
    <property type="project" value="UniProtKB-UniPathway"/>
</dbReference>
<dbReference type="GO" id="GO:0019856">
    <property type="term" value="P:pyrimidine nucleobase biosynthetic process"/>
    <property type="evidence" value="ECO:0000318"/>
    <property type="project" value="GO_Central"/>
</dbReference>
<dbReference type="GO" id="GO:0006222">
    <property type="term" value="P:UMP biosynthetic process"/>
    <property type="evidence" value="ECO:0000318"/>
    <property type="project" value="GO_Central"/>
</dbReference>
<dbReference type="CDD" id="cd04725">
    <property type="entry name" value="OMP_decarboxylase_like"/>
    <property type="match status" value="1"/>
</dbReference>
<dbReference type="CDD" id="cd06223">
    <property type="entry name" value="PRTases_typeI"/>
    <property type="match status" value="1"/>
</dbReference>
<dbReference type="FunFam" id="3.20.20.70:FF:000245">
    <property type="entry name" value="Bifunctional UMP-synthetase"/>
    <property type="match status" value="1"/>
</dbReference>
<dbReference type="FunFam" id="3.40.50.2020:FF:000025">
    <property type="entry name" value="Uridine monophosphate synthetase"/>
    <property type="match status" value="1"/>
</dbReference>
<dbReference type="Gene3D" id="3.40.50.2020">
    <property type="match status" value="1"/>
</dbReference>
<dbReference type="Gene3D" id="3.20.20.70">
    <property type="entry name" value="Aldolase class I"/>
    <property type="match status" value="1"/>
</dbReference>
<dbReference type="HAMAP" id="MF_01208">
    <property type="entry name" value="PyrE"/>
    <property type="match status" value="1"/>
</dbReference>
<dbReference type="InterPro" id="IPR013785">
    <property type="entry name" value="Aldolase_TIM"/>
</dbReference>
<dbReference type="InterPro" id="IPR014732">
    <property type="entry name" value="OMPdecase"/>
</dbReference>
<dbReference type="InterPro" id="IPR018089">
    <property type="entry name" value="OMPdecase_AS"/>
</dbReference>
<dbReference type="InterPro" id="IPR001754">
    <property type="entry name" value="OMPdeCOase_dom"/>
</dbReference>
<dbReference type="InterPro" id="IPR023031">
    <property type="entry name" value="OPRT"/>
</dbReference>
<dbReference type="InterPro" id="IPR004467">
    <property type="entry name" value="Or_phspho_trans_dom"/>
</dbReference>
<dbReference type="InterPro" id="IPR000836">
    <property type="entry name" value="PRibTrfase_dom"/>
</dbReference>
<dbReference type="InterPro" id="IPR029057">
    <property type="entry name" value="PRTase-like"/>
</dbReference>
<dbReference type="InterPro" id="IPR011060">
    <property type="entry name" value="RibuloseP-bd_barrel"/>
</dbReference>
<dbReference type="NCBIfam" id="TIGR00336">
    <property type="entry name" value="pyrE"/>
    <property type="match status" value="1"/>
</dbReference>
<dbReference type="NCBIfam" id="TIGR01740">
    <property type="entry name" value="pyrF"/>
    <property type="match status" value="1"/>
</dbReference>
<dbReference type="PANTHER" id="PTHR19278">
    <property type="entry name" value="OROTATE PHOSPHORIBOSYLTRANSFERASE"/>
    <property type="match status" value="1"/>
</dbReference>
<dbReference type="PANTHER" id="PTHR19278:SF9">
    <property type="entry name" value="URIDINE 5'-MONOPHOSPHATE SYNTHASE"/>
    <property type="match status" value="1"/>
</dbReference>
<dbReference type="Pfam" id="PF00215">
    <property type="entry name" value="OMPdecase"/>
    <property type="match status" value="1"/>
</dbReference>
<dbReference type="Pfam" id="PF00156">
    <property type="entry name" value="Pribosyltran"/>
    <property type="match status" value="1"/>
</dbReference>
<dbReference type="SMART" id="SM00934">
    <property type="entry name" value="OMPdecase"/>
    <property type="match status" value="1"/>
</dbReference>
<dbReference type="SUPFAM" id="SSF53271">
    <property type="entry name" value="PRTase-like"/>
    <property type="match status" value="1"/>
</dbReference>
<dbReference type="SUPFAM" id="SSF51366">
    <property type="entry name" value="Ribulose-phoshate binding barrel"/>
    <property type="match status" value="1"/>
</dbReference>
<dbReference type="PROSITE" id="PS00156">
    <property type="entry name" value="OMPDECASE"/>
    <property type="match status" value="1"/>
</dbReference>
<dbReference type="PROSITE" id="PS00103">
    <property type="entry name" value="PUR_PYR_PR_TRANSFER"/>
    <property type="match status" value="1"/>
</dbReference>
<accession>Q01637</accession>
<accession>Q24221</accession>
<accession>Q9VDF2</accession>
<keyword id="KW-0210">Decarboxylase</keyword>
<keyword id="KW-0328">Glycosyltransferase</keyword>
<keyword id="KW-0456">Lyase</keyword>
<keyword id="KW-0511">Multifunctional enzyme</keyword>
<keyword id="KW-0665">Pyrimidine biosynthesis</keyword>
<keyword id="KW-1185">Reference proteome</keyword>
<keyword id="KW-0808">Transferase</keyword>
<evidence type="ECO:0000250" key="1"/>
<evidence type="ECO:0000305" key="2"/>
<reference key="1">
    <citation type="journal article" date="1993" name="Gene">
        <title>Structure of the rudimentary-like gene and UMP synthase in Drosophila melanogaster.</title>
        <authorList>
            <person name="Eisenberg M."/>
            <person name="Kirkpatrick R."/>
            <person name="Rawls J."/>
        </authorList>
    </citation>
    <scope>NUCLEOTIDE SEQUENCE [GENOMIC DNA]</scope>
</reference>
<reference key="2">
    <citation type="journal article" date="2000" name="Science">
        <title>The genome sequence of Drosophila melanogaster.</title>
        <authorList>
            <person name="Adams M.D."/>
            <person name="Celniker S.E."/>
            <person name="Holt R.A."/>
            <person name="Evans C.A."/>
            <person name="Gocayne J.D."/>
            <person name="Amanatides P.G."/>
            <person name="Scherer S.E."/>
            <person name="Li P.W."/>
            <person name="Hoskins R.A."/>
            <person name="Galle R.F."/>
            <person name="George R.A."/>
            <person name="Lewis S.E."/>
            <person name="Richards S."/>
            <person name="Ashburner M."/>
            <person name="Henderson S.N."/>
            <person name="Sutton G.G."/>
            <person name="Wortman J.R."/>
            <person name="Yandell M.D."/>
            <person name="Zhang Q."/>
            <person name="Chen L.X."/>
            <person name="Brandon R.C."/>
            <person name="Rogers Y.-H.C."/>
            <person name="Blazej R.G."/>
            <person name="Champe M."/>
            <person name="Pfeiffer B.D."/>
            <person name="Wan K.H."/>
            <person name="Doyle C."/>
            <person name="Baxter E.G."/>
            <person name="Helt G."/>
            <person name="Nelson C.R."/>
            <person name="Miklos G.L.G."/>
            <person name="Abril J.F."/>
            <person name="Agbayani A."/>
            <person name="An H.-J."/>
            <person name="Andrews-Pfannkoch C."/>
            <person name="Baldwin D."/>
            <person name="Ballew R.M."/>
            <person name="Basu A."/>
            <person name="Baxendale J."/>
            <person name="Bayraktaroglu L."/>
            <person name="Beasley E.M."/>
            <person name="Beeson K.Y."/>
            <person name="Benos P.V."/>
            <person name="Berman B.P."/>
            <person name="Bhandari D."/>
            <person name="Bolshakov S."/>
            <person name="Borkova D."/>
            <person name="Botchan M.R."/>
            <person name="Bouck J."/>
            <person name="Brokstein P."/>
            <person name="Brottier P."/>
            <person name="Burtis K.C."/>
            <person name="Busam D.A."/>
            <person name="Butler H."/>
            <person name="Cadieu E."/>
            <person name="Center A."/>
            <person name="Chandra I."/>
            <person name="Cherry J.M."/>
            <person name="Cawley S."/>
            <person name="Dahlke C."/>
            <person name="Davenport L.B."/>
            <person name="Davies P."/>
            <person name="de Pablos B."/>
            <person name="Delcher A."/>
            <person name="Deng Z."/>
            <person name="Mays A.D."/>
            <person name="Dew I."/>
            <person name="Dietz S.M."/>
            <person name="Dodson K."/>
            <person name="Doup L.E."/>
            <person name="Downes M."/>
            <person name="Dugan-Rocha S."/>
            <person name="Dunkov B.C."/>
            <person name="Dunn P."/>
            <person name="Durbin K.J."/>
            <person name="Evangelista C.C."/>
            <person name="Ferraz C."/>
            <person name="Ferriera S."/>
            <person name="Fleischmann W."/>
            <person name="Fosler C."/>
            <person name="Gabrielian A.E."/>
            <person name="Garg N.S."/>
            <person name="Gelbart W.M."/>
            <person name="Glasser K."/>
            <person name="Glodek A."/>
            <person name="Gong F."/>
            <person name="Gorrell J.H."/>
            <person name="Gu Z."/>
            <person name="Guan P."/>
            <person name="Harris M."/>
            <person name="Harris N.L."/>
            <person name="Harvey D.A."/>
            <person name="Heiman T.J."/>
            <person name="Hernandez J.R."/>
            <person name="Houck J."/>
            <person name="Hostin D."/>
            <person name="Houston K.A."/>
            <person name="Howland T.J."/>
            <person name="Wei M.-H."/>
            <person name="Ibegwam C."/>
            <person name="Jalali M."/>
            <person name="Kalush F."/>
            <person name="Karpen G.H."/>
            <person name="Ke Z."/>
            <person name="Kennison J.A."/>
            <person name="Ketchum K.A."/>
            <person name="Kimmel B.E."/>
            <person name="Kodira C.D."/>
            <person name="Kraft C.L."/>
            <person name="Kravitz S."/>
            <person name="Kulp D."/>
            <person name="Lai Z."/>
            <person name="Lasko P."/>
            <person name="Lei Y."/>
            <person name="Levitsky A.A."/>
            <person name="Li J.H."/>
            <person name="Li Z."/>
            <person name="Liang Y."/>
            <person name="Lin X."/>
            <person name="Liu X."/>
            <person name="Mattei B."/>
            <person name="McIntosh T.C."/>
            <person name="McLeod M.P."/>
            <person name="McPherson D."/>
            <person name="Merkulov G."/>
            <person name="Milshina N.V."/>
            <person name="Mobarry C."/>
            <person name="Morris J."/>
            <person name="Moshrefi A."/>
            <person name="Mount S.M."/>
            <person name="Moy M."/>
            <person name="Murphy B."/>
            <person name="Murphy L."/>
            <person name="Muzny D.M."/>
            <person name="Nelson D.L."/>
            <person name="Nelson D.R."/>
            <person name="Nelson K.A."/>
            <person name="Nixon K."/>
            <person name="Nusskern D.R."/>
            <person name="Pacleb J.M."/>
            <person name="Palazzolo M."/>
            <person name="Pittman G.S."/>
            <person name="Pan S."/>
            <person name="Pollard J."/>
            <person name="Puri V."/>
            <person name="Reese M.G."/>
            <person name="Reinert K."/>
            <person name="Remington K."/>
            <person name="Saunders R.D.C."/>
            <person name="Scheeler F."/>
            <person name="Shen H."/>
            <person name="Shue B.C."/>
            <person name="Siden-Kiamos I."/>
            <person name="Simpson M."/>
            <person name="Skupski M.P."/>
            <person name="Smith T.J."/>
            <person name="Spier E."/>
            <person name="Spradling A.C."/>
            <person name="Stapleton M."/>
            <person name="Strong R."/>
            <person name="Sun E."/>
            <person name="Svirskas R."/>
            <person name="Tector C."/>
            <person name="Turner R."/>
            <person name="Venter E."/>
            <person name="Wang A.H."/>
            <person name="Wang X."/>
            <person name="Wang Z.-Y."/>
            <person name="Wassarman D.A."/>
            <person name="Weinstock G.M."/>
            <person name="Weissenbach J."/>
            <person name="Williams S.M."/>
            <person name="Woodage T."/>
            <person name="Worley K.C."/>
            <person name="Wu D."/>
            <person name="Yang S."/>
            <person name="Yao Q.A."/>
            <person name="Ye J."/>
            <person name="Yeh R.-F."/>
            <person name="Zaveri J.S."/>
            <person name="Zhan M."/>
            <person name="Zhang G."/>
            <person name="Zhao Q."/>
            <person name="Zheng L."/>
            <person name="Zheng X.H."/>
            <person name="Zhong F.N."/>
            <person name="Zhong W."/>
            <person name="Zhou X."/>
            <person name="Zhu S.C."/>
            <person name="Zhu X."/>
            <person name="Smith H.O."/>
            <person name="Gibbs R.A."/>
            <person name="Myers E.W."/>
            <person name="Rubin G.M."/>
            <person name="Venter J.C."/>
        </authorList>
    </citation>
    <scope>NUCLEOTIDE SEQUENCE [LARGE SCALE GENOMIC DNA]</scope>
    <source>
        <strain>Berkeley</strain>
    </source>
</reference>
<reference key="3">
    <citation type="journal article" date="2002" name="Genome Biol.">
        <title>Annotation of the Drosophila melanogaster euchromatic genome: a systematic review.</title>
        <authorList>
            <person name="Misra S."/>
            <person name="Crosby M.A."/>
            <person name="Mungall C.J."/>
            <person name="Matthews B.B."/>
            <person name="Campbell K.S."/>
            <person name="Hradecky P."/>
            <person name="Huang Y."/>
            <person name="Kaminker J.S."/>
            <person name="Millburn G.H."/>
            <person name="Prochnik S.E."/>
            <person name="Smith C.D."/>
            <person name="Tupy J.L."/>
            <person name="Whitfield E.J."/>
            <person name="Bayraktaroglu L."/>
            <person name="Berman B.P."/>
            <person name="Bettencourt B.R."/>
            <person name="Celniker S.E."/>
            <person name="de Grey A.D.N.J."/>
            <person name="Drysdale R.A."/>
            <person name="Harris N.L."/>
            <person name="Richter J."/>
            <person name="Russo S."/>
            <person name="Schroeder A.J."/>
            <person name="Shu S.Q."/>
            <person name="Stapleton M."/>
            <person name="Yamada C."/>
            <person name="Ashburner M."/>
            <person name="Gelbart W.M."/>
            <person name="Rubin G.M."/>
            <person name="Lewis S.E."/>
        </authorList>
    </citation>
    <scope>GENOME REANNOTATION</scope>
    <source>
        <strain>Berkeley</strain>
    </source>
</reference>
<reference key="4">
    <citation type="journal article" date="2002" name="Genome Biol.">
        <title>A Drosophila full-length cDNA resource.</title>
        <authorList>
            <person name="Stapleton M."/>
            <person name="Carlson J.W."/>
            <person name="Brokstein P."/>
            <person name="Yu C."/>
            <person name="Champe M."/>
            <person name="George R.A."/>
            <person name="Guarin H."/>
            <person name="Kronmiller B."/>
            <person name="Pacleb J.M."/>
            <person name="Park S."/>
            <person name="Wan K.H."/>
            <person name="Rubin G.M."/>
            <person name="Celniker S.E."/>
        </authorList>
    </citation>
    <scope>NUCLEOTIDE SEQUENCE [LARGE SCALE MRNA]</scope>
    <source>
        <strain>Berkeley</strain>
        <tissue>Embryo</tissue>
    </source>
</reference>
<reference key="5">
    <citation type="journal article" date="1990" name="Mol. Gen. Genet.">
        <title>Molecular cloning of the UMP synthase gene rudimentary-like from Drosophila melanogaster.</title>
        <authorList>
            <person name="Eisenberg M.T."/>
            <person name="Gathy K."/>
            <person name="Vincent T."/>
            <person name="Rawls J."/>
        </authorList>
    </citation>
    <scope>NUCLEOTIDE SEQUENCE [MRNA] OF 1-78</scope>
</reference>
<sequence length="493" mass="53419">MVAQNSDKMRALALKLFEINAFKFGDFKMKVGINSPVYFDLRVIVSYPDVMQTVSDLLVEHIKDKQLSAKHVCGVPYTALPLATIVSVQQGTPMLVRRKEAKAYGTKKLVEGIFNAGDTCLIVEDVVTSGSSILDTVRDLQGEGIVVTDAVVVVDREQGGVANIAKHGVRMHSLFTLSFLLNTLHEAGRIEKSTVEAVAKYIAAVQINSDGTFVGGDKGDVVRANDLQRTKLTYENRANLAKSAVAKRLFNLIASKQTNLCLAADLTHADEILDVADKCGPYICLLKTHVDIVEDFSDKFIADLQALAQRHNFLLMEDRKFADIGNTVSLQYGKGIYKISSWADLVTAHTLPGRSILQGLKAGLGEGGAGKERGVFLLAEMSASGNLIDAKYKENSNKIATEGADVDFVAGVVCQSSDAFAFPGLLQLTPGVKIDEGVDQLGQQYQSPEHVVKERGADIGVVGRGILKASSPKQAAQTYRDRLWAAYQDRVAK</sequence>
<feature type="chain" id="PRO_0000139652" description="Uridine 5'-monophosphate synthase">
    <location>
        <begin position="1"/>
        <end position="493"/>
    </location>
</feature>
<feature type="region of interest" description="OPRTase">
    <location>
        <begin position="1"/>
        <end position="207"/>
    </location>
</feature>
<feature type="region of interest" description="Domain linker">
    <location>
        <begin position="208"/>
        <end position="233"/>
    </location>
</feature>
<feature type="region of interest" description="OMPdecase">
    <location>
        <begin position="234"/>
        <end position="493"/>
    </location>
</feature>
<feature type="active site" evidence="1">
    <location>
        <position position="320"/>
    </location>
</feature>
<feature type="sequence conflict" description="In Ref. 1; AAA29012." evidence="2" ref="1">
    <original>YPDVM</original>
    <variation>LGLPQ</variation>
    <location>
        <begin position="47"/>
        <end position="51"/>
    </location>
</feature>
<feature type="sequence conflict" description="In Ref. 1; AAA29012." evidence="2" ref="1">
    <original>L</original>
    <variation>R</variation>
    <location>
        <position position="82"/>
    </location>
</feature>
<feature type="sequence conflict" description="In Ref. 1; AAA29012." evidence="2" ref="1">
    <original>GDVVR</original>
    <variation>VTFPA</variation>
    <location>
        <begin position="219"/>
        <end position="223"/>
    </location>
</feature>
<feature type="sequence conflict" description="In Ref. 1; AAA29012." evidence="2" ref="1">
    <original>N</original>
    <variation>S</variation>
    <location>
        <position position="236"/>
    </location>
</feature>
<protein>
    <recommendedName>
        <fullName>Uridine 5'-monophosphate synthase</fullName>
        <shortName>UMP synthase</shortName>
    </recommendedName>
    <alternativeName>
        <fullName>Rudimentary-like protein</fullName>
    </alternativeName>
    <domain>
        <recommendedName>
            <fullName>Orotate phosphoribosyltransferase</fullName>
            <shortName>OPRTase</shortName>
            <ecNumber>2.4.2.10</ecNumber>
        </recommendedName>
    </domain>
    <domain>
        <recommendedName>
            <fullName>Orotidine 5'-phosphate decarboxylase</fullName>
            <ecNumber>4.1.1.23</ecNumber>
        </recommendedName>
        <alternativeName>
            <fullName>OMPdecase</fullName>
        </alternativeName>
    </domain>
</protein>
<comment type="catalytic activity">
    <reaction>
        <text>orotidine 5'-phosphate + diphosphate = orotate + 5-phospho-alpha-D-ribose 1-diphosphate</text>
        <dbReference type="Rhea" id="RHEA:10380"/>
        <dbReference type="ChEBI" id="CHEBI:30839"/>
        <dbReference type="ChEBI" id="CHEBI:33019"/>
        <dbReference type="ChEBI" id="CHEBI:57538"/>
        <dbReference type="ChEBI" id="CHEBI:58017"/>
        <dbReference type="EC" id="2.4.2.10"/>
    </reaction>
</comment>
<comment type="catalytic activity">
    <reaction>
        <text>orotidine 5'-phosphate + H(+) = UMP + CO2</text>
        <dbReference type="Rhea" id="RHEA:11596"/>
        <dbReference type="ChEBI" id="CHEBI:15378"/>
        <dbReference type="ChEBI" id="CHEBI:16526"/>
        <dbReference type="ChEBI" id="CHEBI:57538"/>
        <dbReference type="ChEBI" id="CHEBI:57865"/>
        <dbReference type="EC" id="4.1.1.23"/>
    </reaction>
</comment>
<comment type="pathway">
    <text>Pyrimidine metabolism; UMP biosynthesis via de novo pathway; UMP from orotate: step 1/2.</text>
</comment>
<comment type="pathway">
    <text>Pyrimidine metabolism; UMP biosynthesis via de novo pathway; UMP from orotate: step 2/2.</text>
</comment>
<comment type="similarity">
    <text evidence="2">In the N-terminal section; belongs to the purine/pyrimidine phosphoribosyltransferase family.</text>
</comment>
<comment type="similarity">
    <text evidence="2">In the C-terminal section; belongs to the OMP decarboxylase family.</text>
</comment>